<name>NRDR_STRSV</name>
<organism>
    <name type="scientific">Streptococcus sanguinis (strain SK36)</name>
    <dbReference type="NCBI Taxonomy" id="388919"/>
    <lineage>
        <taxon>Bacteria</taxon>
        <taxon>Bacillati</taxon>
        <taxon>Bacillota</taxon>
        <taxon>Bacilli</taxon>
        <taxon>Lactobacillales</taxon>
        <taxon>Streptococcaceae</taxon>
        <taxon>Streptococcus</taxon>
    </lineage>
</organism>
<proteinExistence type="inferred from homology"/>
<evidence type="ECO:0000255" key="1">
    <source>
        <dbReference type="HAMAP-Rule" id="MF_00440"/>
    </source>
</evidence>
<evidence type="ECO:0000256" key="2">
    <source>
        <dbReference type="SAM" id="MobiDB-lite"/>
    </source>
</evidence>
<keyword id="KW-0067">ATP-binding</keyword>
<keyword id="KW-0238">DNA-binding</keyword>
<keyword id="KW-0479">Metal-binding</keyword>
<keyword id="KW-0547">Nucleotide-binding</keyword>
<keyword id="KW-1185">Reference proteome</keyword>
<keyword id="KW-0678">Repressor</keyword>
<keyword id="KW-0804">Transcription</keyword>
<keyword id="KW-0805">Transcription regulation</keyword>
<keyword id="KW-0862">Zinc</keyword>
<keyword id="KW-0863">Zinc-finger</keyword>
<dbReference type="EMBL" id="CP000387">
    <property type="protein sequence ID" value="ABN45189.1"/>
    <property type="molecule type" value="Genomic_DNA"/>
</dbReference>
<dbReference type="RefSeq" id="WP_002894570.1">
    <property type="nucleotide sequence ID" value="NZ_CAXTYR010000001.1"/>
</dbReference>
<dbReference type="RefSeq" id="YP_001035739.1">
    <property type="nucleotide sequence ID" value="NC_009009.1"/>
</dbReference>
<dbReference type="SMR" id="A3CPT4"/>
<dbReference type="STRING" id="388919.SSA_1807"/>
<dbReference type="GeneID" id="48426138"/>
<dbReference type="KEGG" id="ssa:SSA_1807"/>
<dbReference type="PATRIC" id="fig|388919.9.peg.1714"/>
<dbReference type="eggNOG" id="COG1327">
    <property type="taxonomic scope" value="Bacteria"/>
</dbReference>
<dbReference type="HOGENOM" id="CLU_108412_0_0_9"/>
<dbReference type="OrthoDB" id="9807461at2"/>
<dbReference type="Proteomes" id="UP000002148">
    <property type="component" value="Chromosome"/>
</dbReference>
<dbReference type="GO" id="GO:0005524">
    <property type="term" value="F:ATP binding"/>
    <property type="evidence" value="ECO:0007669"/>
    <property type="project" value="UniProtKB-KW"/>
</dbReference>
<dbReference type="GO" id="GO:0003677">
    <property type="term" value="F:DNA binding"/>
    <property type="evidence" value="ECO:0007669"/>
    <property type="project" value="UniProtKB-KW"/>
</dbReference>
<dbReference type="GO" id="GO:0008270">
    <property type="term" value="F:zinc ion binding"/>
    <property type="evidence" value="ECO:0007669"/>
    <property type="project" value="UniProtKB-UniRule"/>
</dbReference>
<dbReference type="GO" id="GO:0045892">
    <property type="term" value="P:negative regulation of DNA-templated transcription"/>
    <property type="evidence" value="ECO:0007669"/>
    <property type="project" value="UniProtKB-UniRule"/>
</dbReference>
<dbReference type="HAMAP" id="MF_00440">
    <property type="entry name" value="NrdR"/>
    <property type="match status" value="1"/>
</dbReference>
<dbReference type="InterPro" id="IPR005144">
    <property type="entry name" value="ATP-cone_dom"/>
</dbReference>
<dbReference type="InterPro" id="IPR055173">
    <property type="entry name" value="NrdR-like_N"/>
</dbReference>
<dbReference type="InterPro" id="IPR003796">
    <property type="entry name" value="RNR_NrdR-like"/>
</dbReference>
<dbReference type="NCBIfam" id="TIGR00244">
    <property type="entry name" value="transcriptional regulator NrdR"/>
    <property type="match status" value="1"/>
</dbReference>
<dbReference type="PANTHER" id="PTHR30455">
    <property type="entry name" value="TRANSCRIPTIONAL REPRESSOR NRDR"/>
    <property type="match status" value="1"/>
</dbReference>
<dbReference type="PANTHER" id="PTHR30455:SF2">
    <property type="entry name" value="TRANSCRIPTIONAL REPRESSOR NRDR"/>
    <property type="match status" value="1"/>
</dbReference>
<dbReference type="Pfam" id="PF03477">
    <property type="entry name" value="ATP-cone"/>
    <property type="match status" value="1"/>
</dbReference>
<dbReference type="Pfam" id="PF22811">
    <property type="entry name" value="Zn_ribbon_NrdR"/>
    <property type="match status" value="1"/>
</dbReference>
<dbReference type="PROSITE" id="PS51161">
    <property type="entry name" value="ATP_CONE"/>
    <property type="match status" value="1"/>
</dbReference>
<protein>
    <recommendedName>
        <fullName evidence="1">Transcriptional repressor NrdR</fullName>
    </recommendedName>
</protein>
<accession>A3CPT4</accession>
<feature type="chain" id="PRO_1000080846" description="Transcriptional repressor NrdR">
    <location>
        <begin position="1"/>
        <end position="157"/>
    </location>
</feature>
<feature type="domain" description="ATP-cone" evidence="1">
    <location>
        <begin position="49"/>
        <end position="139"/>
    </location>
</feature>
<feature type="zinc finger region" evidence="1">
    <location>
        <begin position="3"/>
        <end position="34"/>
    </location>
</feature>
<feature type="region of interest" description="Disordered" evidence="2">
    <location>
        <begin position="1"/>
        <end position="24"/>
    </location>
</feature>
<reference key="1">
    <citation type="journal article" date="2007" name="J. Bacteriol.">
        <title>Genome of the opportunistic pathogen Streptococcus sanguinis.</title>
        <authorList>
            <person name="Xu P."/>
            <person name="Alves J.M."/>
            <person name="Kitten T."/>
            <person name="Brown A."/>
            <person name="Chen Z."/>
            <person name="Ozaki L.S."/>
            <person name="Manque P."/>
            <person name="Ge X."/>
            <person name="Serrano M.G."/>
            <person name="Puiu D."/>
            <person name="Hendricks S."/>
            <person name="Wang Y."/>
            <person name="Chaplin M.D."/>
            <person name="Akan D."/>
            <person name="Paik S."/>
            <person name="Peterson D.L."/>
            <person name="Macrina F.L."/>
            <person name="Buck G.A."/>
        </authorList>
    </citation>
    <scope>NUCLEOTIDE SEQUENCE [LARGE SCALE GENOMIC DNA]</scope>
    <source>
        <strain>SK36</strain>
    </source>
</reference>
<comment type="function">
    <text evidence="1">Negatively regulates transcription of bacterial ribonucleotide reductase nrd genes and operons by binding to NrdR-boxes.</text>
</comment>
<comment type="cofactor">
    <cofactor evidence="1">
        <name>Zn(2+)</name>
        <dbReference type="ChEBI" id="CHEBI:29105"/>
    </cofactor>
    <text evidence="1">Binds 1 zinc ion.</text>
</comment>
<comment type="similarity">
    <text evidence="1">Belongs to the NrdR family.</text>
</comment>
<gene>
    <name evidence="1" type="primary">nrdR</name>
    <name type="ordered locus">SSA_1807</name>
</gene>
<sequence>MRCPKCGGNKSSVVDSRQAEDGNTIRRRRECEECQHRFTTYERVEERTLVVVKKDGTREQFSRDKIFNGIIRSAQKRPVSSDEIEEIVNRIEQKVRSQSDNEINSEYIGSLVMDELAELDEITYVRFASVYRSFKDVGELESLLKQITKGSKKKKDK</sequence>